<organism>
    <name type="scientific">Meleagris gallopavo</name>
    <name type="common">Wild turkey</name>
    <dbReference type="NCBI Taxonomy" id="9103"/>
    <lineage>
        <taxon>Eukaryota</taxon>
        <taxon>Metazoa</taxon>
        <taxon>Chordata</taxon>
        <taxon>Craniata</taxon>
        <taxon>Vertebrata</taxon>
        <taxon>Euteleostomi</taxon>
        <taxon>Archelosauria</taxon>
        <taxon>Archosauria</taxon>
        <taxon>Dinosauria</taxon>
        <taxon>Saurischia</taxon>
        <taxon>Theropoda</taxon>
        <taxon>Coelurosauria</taxon>
        <taxon>Aves</taxon>
        <taxon>Neognathae</taxon>
        <taxon>Galloanserae</taxon>
        <taxon>Galliformes</taxon>
        <taxon>Phasianidae</taxon>
        <taxon>Meleagridinae</taxon>
        <taxon>Meleagris</taxon>
    </lineage>
</organism>
<name>HBA_MELGA</name>
<feature type="initiator methionine" description="Removed" evidence="2">
    <location>
        <position position="1"/>
    </location>
</feature>
<feature type="chain" id="PRO_0000052689" description="Hemoglobin subunit alpha-A">
    <location>
        <begin position="2"/>
        <end position="142"/>
    </location>
</feature>
<feature type="domain" description="Globin" evidence="1">
    <location>
        <begin position="2"/>
        <end position="142"/>
    </location>
</feature>
<feature type="binding site" evidence="1">
    <location>
        <position position="59"/>
    </location>
    <ligand>
        <name>O2</name>
        <dbReference type="ChEBI" id="CHEBI:15379"/>
    </ligand>
</feature>
<feature type="binding site" description="proximal binding residue" evidence="1">
    <location>
        <position position="88"/>
    </location>
    <ligand>
        <name>heme b</name>
        <dbReference type="ChEBI" id="CHEBI:60344"/>
    </ligand>
    <ligandPart>
        <name>Fe</name>
        <dbReference type="ChEBI" id="CHEBI:18248"/>
    </ligandPart>
</feature>
<feature type="helix" evidence="4">
    <location>
        <begin position="5"/>
        <end position="18"/>
    </location>
</feature>
<feature type="helix" evidence="3">
    <location>
        <begin position="19"/>
        <end position="21"/>
    </location>
</feature>
<feature type="helix" evidence="4">
    <location>
        <begin position="22"/>
        <end position="36"/>
    </location>
</feature>
<feature type="helix" evidence="4">
    <location>
        <begin position="38"/>
        <end position="43"/>
    </location>
</feature>
<feature type="helix" evidence="4">
    <location>
        <begin position="54"/>
        <end position="72"/>
    </location>
</feature>
<feature type="turn" evidence="4">
    <location>
        <begin position="73"/>
        <end position="75"/>
    </location>
</feature>
<feature type="helix" evidence="4">
    <location>
        <begin position="77"/>
        <end position="89"/>
    </location>
</feature>
<feature type="helix" evidence="4">
    <location>
        <begin position="97"/>
        <end position="113"/>
    </location>
</feature>
<feature type="turn" evidence="4">
    <location>
        <begin position="115"/>
        <end position="117"/>
    </location>
</feature>
<feature type="helix" evidence="4">
    <location>
        <begin position="120"/>
        <end position="137"/>
    </location>
</feature>
<dbReference type="PIR" id="S56102">
    <property type="entry name" value="S56102"/>
</dbReference>
<dbReference type="PDB" id="2QMB">
    <property type="method" value="X-ray"/>
    <property type="resolution" value="2.80 A"/>
    <property type="chains" value="A/C=1-142"/>
</dbReference>
<dbReference type="PDB" id="3K8B">
    <property type="method" value="X-ray"/>
    <property type="resolution" value="2.30 A"/>
    <property type="chains" value="A/C=2-142"/>
</dbReference>
<dbReference type="PDB" id="6ZMX">
    <property type="method" value="X-ray"/>
    <property type="resolution" value="1.39 A"/>
    <property type="chains" value="A/C=2-142"/>
</dbReference>
<dbReference type="PDB" id="6ZMY">
    <property type="method" value="X-ray"/>
    <property type="resolution" value="1.66 A"/>
    <property type="chains" value="A/C=2-142"/>
</dbReference>
<dbReference type="PDBsum" id="2QMB"/>
<dbReference type="PDBsum" id="3K8B"/>
<dbReference type="PDBsum" id="6ZMX"/>
<dbReference type="PDBsum" id="6ZMY"/>
<dbReference type="SMR" id="P81023"/>
<dbReference type="FunCoup" id="P81023">
    <property type="interactions" value="156"/>
</dbReference>
<dbReference type="InParanoid" id="P81023"/>
<dbReference type="EvolutionaryTrace" id="P81023"/>
<dbReference type="Proteomes" id="UP000001645">
    <property type="component" value="Unplaced"/>
</dbReference>
<dbReference type="GO" id="GO:0072562">
    <property type="term" value="C:blood microparticle"/>
    <property type="evidence" value="ECO:0007669"/>
    <property type="project" value="TreeGrafter"/>
</dbReference>
<dbReference type="GO" id="GO:0031838">
    <property type="term" value="C:haptoglobin-hemoglobin complex"/>
    <property type="evidence" value="ECO:0007669"/>
    <property type="project" value="TreeGrafter"/>
</dbReference>
<dbReference type="GO" id="GO:0005833">
    <property type="term" value="C:hemoglobin complex"/>
    <property type="evidence" value="ECO:0007669"/>
    <property type="project" value="InterPro"/>
</dbReference>
<dbReference type="GO" id="GO:0031720">
    <property type="term" value="F:haptoglobin binding"/>
    <property type="evidence" value="ECO:0007669"/>
    <property type="project" value="TreeGrafter"/>
</dbReference>
<dbReference type="GO" id="GO:0020037">
    <property type="term" value="F:heme binding"/>
    <property type="evidence" value="ECO:0007669"/>
    <property type="project" value="InterPro"/>
</dbReference>
<dbReference type="GO" id="GO:0005506">
    <property type="term" value="F:iron ion binding"/>
    <property type="evidence" value="ECO:0007669"/>
    <property type="project" value="InterPro"/>
</dbReference>
<dbReference type="GO" id="GO:0043177">
    <property type="term" value="F:organic acid binding"/>
    <property type="evidence" value="ECO:0007669"/>
    <property type="project" value="TreeGrafter"/>
</dbReference>
<dbReference type="GO" id="GO:0019825">
    <property type="term" value="F:oxygen binding"/>
    <property type="evidence" value="ECO:0007669"/>
    <property type="project" value="InterPro"/>
</dbReference>
<dbReference type="GO" id="GO:0005344">
    <property type="term" value="F:oxygen carrier activity"/>
    <property type="evidence" value="ECO:0007669"/>
    <property type="project" value="UniProtKB-KW"/>
</dbReference>
<dbReference type="GO" id="GO:0004601">
    <property type="term" value="F:peroxidase activity"/>
    <property type="evidence" value="ECO:0007669"/>
    <property type="project" value="TreeGrafter"/>
</dbReference>
<dbReference type="GO" id="GO:0042744">
    <property type="term" value="P:hydrogen peroxide catabolic process"/>
    <property type="evidence" value="ECO:0007669"/>
    <property type="project" value="TreeGrafter"/>
</dbReference>
<dbReference type="CDD" id="cd08927">
    <property type="entry name" value="Hb-alpha-like"/>
    <property type="match status" value="1"/>
</dbReference>
<dbReference type="FunFam" id="1.10.490.10:FF:000002">
    <property type="entry name" value="Hemoglobin subunit alpha"/>
    <property type="match status" value="1"/>
</dbReference>
<dbReference type="Gene3D" id="1.10.490.10">
    <property type="entry name" value="Globins"/>
    <property type="match status" value="1"/>
</dbReference>
<dbReference type="InterPro" id="IPR000971">
    <property type="entry name" value="Globin"/>
</dbReference>
<dbReference type="InterPro" id="IPR009050">
    <property type="entry name" value="Globin-like_sf"/>
</dbReference>
<dbReference type="InterPro" id="IPR012292">
    <property type="entry name" value="Globin/Proto"/>
</dbReference>
<dbReference type="InterPro" id="IPR002338">
    <property type="entry name" value="Hemoglobin_a-typ"/>
</dbReference>
<dbReference type="InterPro" id="IPR050056">
    <property type="entry name" value="Hemoglobin_oxygen_transport"/>
</dbReference>
<dbReference type="InterPro" id="IPR002339">
    <property type="entry name" value="Hemoglobin_pi"/>
</dbReference>
<dbReference type="PANTHER" id="PTHR11442">
    <property type="entry name" value="HEMOGLOBIN FAMILY MEMBER"/>
    <property type="match status" value="1"/>
</dbReference>
<dbReference type="PANTHER" id="PTHR11442:SF48">
    <property type="entry name" value="HEMOGLOBIN SUBUNIT ALPHA"/>
    <property type="match status" value="1"/>
</dbReference>
<dbReference type="Pfam" id="PF00042">
    <property type="entry name" value="Globin"/>
    <property type="match status" value="1"/>
</dbReference>
<dbReference type="PRINTS" id="PR00612">
    <property type="entry name" value="ALPHAHAEM"/>
</dbReference>
<dbReference type="PRINTS" id="PR00815">
    <property type="entry name" value="PIHAEM"/>
</dbReference>
<dbReference type="SUPFAM" id="SSF46458">
    <property type="entry name" value="Globin-like"/>
    <property type="match status" value="1"/>
</dbReference>
<dbReference type="PROSITE" id="PS01033">
    <property type="entry name" value="GLOBIN"/>
    <property type="match status" value="1"/>
</dbReference>
<protein>
    <recommendedName>
        <fullName>Hemoglobin subunit alpha-A</fullName>
    </recommendedName>
    <alternativeName>
        <fullName>Alpha-A-globin</fullName>
    </alternativeName>
    <alternativeName>
        <fullName>Hemoglobin alpha-A chain</fullName>
    </alternativeName>
</protein>
<proteinExistence type="evidence at protein level"/>
<gene>
    <name type="primary">HBAA</name>
</gene>
<comment type="function">
    <text>Involved in oxygen transport from the lung to the various peripheral tissues.</text>
</comment>
<comment type="subunit">
    <text>Heterotetramer of two alpha chains and two beta chains.</text>
</comment>
<comment type="tissue specificity">
    <text>Red blood cells.</text>
</comment>
<comment type="similarity">
    <text evidence="1">Belongs to the globin family.</text>
</comment>
<reference key="1">
    <citation type="journal article" date="1995" name="Biol. Chem. Hoppe-Seyler">
        <title>Amino acid sequence of alpha- and beta-polypeptide chains of turkey (Meleagris gallopavo) hemoglobin.</title>
        <authorList>
            <person name="Eguchi Y."/>
            <person name="Ikehara T."/>
            <person name="Kayo S."/>
            <person name="Eguchi T."/>
            <person name="Takei H."/>
        </authorList>
    </citation>
    <scope>PROTEIN SEQUENCE OF 2-142</scope>
</reference>
<evidence type="ECO:0000255" key="1">
    <source>
        <dbReference type="PROSITE-ProRule" id="PRU00238"/>
    </source>
</evidence>
<evidence type="ECO:0000269" key="2">
    <source>
    </source>
</evidence>
<evidence type="ECO:0007829" key="3">
    <source>
        <dbReference type="PDB" id="2QMB"/>
    </source>
</evidence>
<evidence type="ECO:0007829" key="4">
    <source>
        <dbReference type="PDB" id="6ZMX"/>
    </source>
</evidence>
<keyword id="KW-0002">3D-structure</keyword>
<keyword id="KW-0903">Direct protein sequencing</keyword>
<keyword id="KW-0349">Heme</keyword>
<keyword id="KW-0408">Iron</keyword>
<keyword id="KW-0479">Metal-binding</keyword>
<keyword id="KW-0561">Oxygen transport</keyword>
<keyword id="KW-1185">Reference proteome</keyword>
<keyword id="KW-0813">Transport</keyword>
<accession>P81023</accession>
<sequence>MVLSAADKNNVKGIFTKIAGHAEEYGAETLERMFITYPPTKTYFPHFDLSHGSAQIKGHGKKVVAALIEAANHIDDIAGTLSKLSDLHAHKLRVDPVNFKLLGQCFLVVVAIHHPAALTPEVHASLDKFLCAVGTVLTAKYR</sequence>